<reference key="1">
    <citation type="journal article" date="1988" name="Regul. Pept.">
        <title>[Arg3]substance P and neurokinin A from chicken small intestine.</title>
        <authorList>
            <person name="Conlon J.M."/>
            <person name="Katsoulis S."/>
            <person name="Schmidt W.E."/>
            <person name="Thim L."/>
        </authorList>
    </citation>
    <scope>PROTEIN SEQUENCE</scope>
    <scope>AMIDATION AT MET-11</scope>
    <source>
        <tissue>Intestine</tissue>
    </source>
</reference>
<keyword id="KW-0027">Amidation</keyword>
<keyword id="KW-0903">Direct protein sequencing</keyword>
<keyword id="KW-0527">Neuropeptide</keyword>
<keyword id="KW-0529">Neurotransmitter</keyword>
<keyword id="KW-1185">Reference proteome</keyword>
<keyword id="KW-0964">Secreted</keyword>
<accession>P19850</accession>
<organism>
    <name type="scientific">Gallus gallus</name>
    <name type="common">Chicken</name>
    <dbReference type="NCBI Taxonomy" id="9031"/>
    <lineage>
        <taxon>Eukaryota</taxon>
        <taxon>Metazoa</taxon>
        <taxon>Chordata</taxon>
        <taxon>Craniata</taxon>
        <taxon>Vertebrata</taxon>
        <taxon>Euteleostomi</taxon>
        <taxon>Archelosauria</taxon>
        <taxon>Archosauria</taxon>
        <taxon>Dinosauria</taxon>
        <taxon>Saurischia</taxon>
        <taxon>Theropoda</taxon>
        <taxon>Coelurosauria</taxon>
        <taxon>Aves</taxon>
        <taxon>Neognathae</taxon>
        <taxon>Galloanserae</taxon>
        <taxon>Galliformes</taxon>
        <taxon>Phasianidae</taxon>
        <taxon>Phasianinae</taxon>
        <taxon>Gallus</taxon>
    </lineage>
</organism>
<comment type="function">
    <text>Tachykinins are active peptides which excite neurons, evoke behavioral responses, are potent vasodilators and secretagogues, and contract (directly or indirectly) many smooth muscles.</text>
</comment>
<comment type="subcellular location">
    <subcellularLocation>
        <location>Secreted</location>
    </subcellularLocation>
</comment>
<comment type="similarity">
    <text evidence="2">Belongs to the tachykinin family.</text>
</comment>
<dbReference type="PIR" id="JN0023">
    <property type="entry name" value="JN0023"/>
</dbReference>
<dbReference type="InParanoid" id="P19850"/>
<dbReference type="Proteomes" id="UP000000539">
    <property type="component" value="Unassembled WGS sequence"/>
</dbReference>
<dbReference type="GO" id="GO:0005576">
    <property type="term" value="C:extracellular region"/>
    <property type="evidence" value="ECO:0007669"/>
    <property type="project" value="UniProtKB-SubCell"/>
</dbReference>
<dbReference type="GO" id="GO:0045202">
    <property type="term" value="C:synapse"/>
    <property type="evidence" value="ECO:0007669"/>
    <property type="project" value="GOC"/>
</dbReference>
<dbReference type="GO" id="GO:0007268">
    <property type="term" value="P:chemical synaptic transmission"/>
    <property type="evidence" value="ECO:0007669"/>
    <property type="project" value="UniProtKB-KW"/>
</dbReference>
<dbReference type="GO" id="GO:0007218">
    <property type="term" value="P:neuropeptide signaling pathway"/>
    <property type="evidence" value="ECO:0007669"/>
    <property type="project" value="UniProtKB-KW"/>
</dbReference>
<dbReference type="GO" id="GO:0007217">
    <property type="term" value="P:tachykinin receptor signaling pathway"/>
    <property type="evidence" value="ECO:0007669"/>
    <property type="project" value="InterPro"/>
</dbReference>
<dbReference type="InterPro" id="IPR013055">
    <property type="entry name" value="Tachy_Neuro_lke_CS"/>
</dbReference>
<dbReference type="InterPro" id="IPR008215">
    <property type="entry name" value="Tachykinin_dom"/>
</dbReference>
<dbReference type="Pfam" id="PF02202">
    <property type="entry name" value="Tachykinin"/>
    <property type="match status" value="1"/>
</dbReference>
<dbReference type="PROSITE" id="PS00267">
    <property type="entry name" value="TACHYKININ"/>
    <property type="match status" value="1"/>
</dbReference>
<evidence type="ECO:0000269" key="1">
    <source>
    </source>
</evidence>
<evidence type="ECO:0000305" key="2"/>
<feature type="peptide" id="PRO_0000044421" description="Substance P">
    <location>
        <begin position="1"/>
        <end position="11"/>
    </location>
</feature>
<feature type="modified residue" description="Methionine amide" evidence="1">
    <location>
        <position position="11"/>
    </location>
</feature>
<name>TKNA_CHICK</name>
<proteinExistence type="evidence at protein level"/>
<protein>
    <recommendedName>
        <fullName>Substance P</fullName>
    </recommendedName>
</protein>
<sequence>RPRPQQFFGLM</sequence>